<keyword id="KW-0238">DNA-binding</keyword>
<keyword id="KW-0479">Metal-binding</keyword>
<keyword id="KW-0539">Nucleus</keyword>
<keyword id="KW-1185">Reference proteome</keyword>
<keyword id="KW-0804">Transcription</keyword>
<keyword id="KW-0805">Transcription regulation</keyword>
<keyword id="KW-0862">Zinc</keyword>
<keyword id="KW-0863">Zinc-finger</keyword>
<accession>Q6YZE8</accession>
<accession>B7F2B5</accession>
<organism>
    <name type="scientific">Oryza sativa subsp. japonica</name>
    <name type="common">Rice</name>
    <dbReference type="NCBI Taxonomy" id="39947"/>
    <lineage>
        <taxon>Eukaryota</taxon>
        <taxon>Viridiplantae</taxon>
        <taxon>Streptophyta</taxon>
        <taxon>Embryophyta</taxon>
        <taxon>Tracheophyta</taxon>
        <taxon>Spermatophyta</taxon>
        <taxon>Magnoliopsida</taxon>
        <taxon>Liliopsida</taxon>
        <taxon>Poales</taxon>
        <taxon>Poaceae</taxon>
        <taxon>BOP clade</taxon>
        <taxon>Oryzoideae</taxon>
        <taxon>Oryzeae</taxon>
        <taxon>Oryzinae</taxon>
        <taxon>Oryza</taxon>
        <taxon>Oryza sativa</taxon>
    </lineage>
</organism>
<reference key="1">
    <citation type="journal article" date="2005" name="Nature">
        <title>The map-based sequence of the rice genome.</title>
        <authorList>
            <consortium name="International rice genome sequencing project (IRGSP)"/>
        </authorList>
    </citation>
    <scope>NUCLEOTIDE SEQUENCE [LARGE SCALE GENOMIC DNA]</scope>
    <source>
        <strain>cv. Nipponbare</strain>
    </source>
</reference>
<reference key="2">
    <citation type="journal article" date="2008" name="Nucleic Acids Res.">
        <title>The rice annotation project database (RAP-DB): 2008 update.</title>
        <authorList>
            <consortium name="The rice annotation project (RAP)"/>
        </authorList>
    </citation>
    <scope>GENOME REANNOTATION</scope>
    <source>
        <strain>cv. Nipponbare</strain>
    </source>
</reference>
<reference key="3">
    <citation type="journal article" date="2013" name="Rice">
        <title>Improvement of the Oryza sativa Nipponbare reference genome using next generation sequence and optical map data.</title>
        <authorList>
            <person name="Kawahara Y."/>
            <person name="de la Bastide M."/>
            <person name="Hamilton J.P."/>
            <person name="Kanamori H."/>
            <person name="McCombie W.R."/>
            <person name="Ouyang S."/>
            <person name="Schwartz D.C."/>
            <person name="Tanaka T."/>
            <person name="Wu J."/>
            <person name="Zhou S."/>
            <person name="Childs K.L."/>
            <person name="Davidson R.M."/>
            <person name="Lin H."/>
            <person name="Quesada-Ocampo L."/>
            <person name="Vaillancourt B."/>
            <person name="Sakai H."/>
            <person name="Lee S.S."/>
            <person name="Kim J."/>
            <person name="Numa H."/>
            <person name="Itoh T."/>
            <person name="Buell C.R."/>
            <person name="Matsumoto T."/>
        </authorList>
    </citation>
    <scope>GENOME REANNOTATION</scope>
    <source>
        <strain>cv. Nipponbare</strain>
    </source>
</reference>
<reference key="4">
    <citation type="journal article" date="2003" name="Science">
        <title>Collection, mapping, and annotation of over 28,000 cDNA clones from japonica rice.</title>
        <authorList>
            <consortium name="The rice full-length cDNA consortium"/>
        </authorList>
    </citation>
    <scope>NUCLEOTIDE SEQUENCE [LARGE SCALE MRNA]</scope>
    <source>
        <strain>cv. Nipponbare</strain>
    </source>
</reference>
<reference key="5">
    <citation type="journal article" date="2006" name="Plant Physiol.">
        <title>Genomic organization, differential expression, and interaction of SQUAMOSA promoter-binding-like transcription factors and microRNA156 in rice.</title>
        <authorList>
            <person name="Xie K."/>
            <person name="Wu C."/>
            <person name="Xiong L."/>
        </authorList>
    </citation>
    <scope>TISSUE SPECIFICITY</scope>
    <scope>INDUCTION</scope>
    <scope>GENE FAMILY</scope>
    <scope>NOMENCLATURE</scope>
</reference>
<reference key="6">
    <citation type="journal article" date="2008" name="Gene">
        <title>Comparative study of SBP-box gene family in Arabidopsis and rice.</title>
        <authorList>
            <person name="Yang Z."/>
            <person name="Wang X."/>
            <person name="Gu S."/>
            <person name="Hu Z."/>
            <person name="Xu H."/>
            <person name="Xu C."/>
        </authorList>
    </citation>
    <scope>GENE FAMILY</scope>
</reference>
<protein>
    <recommendedName>
        <fullName>Squamosa promoter-binding-like protein 16</fullName>
    </recommendedName>
</protein>
<dbReference type="EMBL" id="AP005529">
    <property type="protein sequence ID" value="BAD11641.1"/>
    <property type="molecule type" value="Genomic_DNA"/>
</dbReference>
<dbReference type="EMBL" id="AP008214">
    <property type="protein sequence ID" value="BAF24248.1"/>
    <property type="molecule type" value="Genomic_DNA"/>
</dbReference>
<dbReference type="EMBL" id="AP014964">
    <property type="protein sequence ID" value="BAT06401.1"/>
    <property type="molecule type" value="Genomic_DNA"/>
</dbReference>
<dbReference type="EMBL" id="AK109469">
    <property type="protein sequence ID" value="BAG98762.1"/>
    <property type="molecule type" value="mRNA"/>
</dbReference>
<dbReference type="RefSeq" id="XP_015649377.1">
    <property type="nucleotide sequence ID" value="XM_015793891.1"/>
</dbReference>
<dbReference type="SMR" id="Q6YZE8"/>
<dbReference type="FunCoup" id="Q6YZE8">
    <property type="interactions" value="2072"/>
</dbReference>
<dbReference type="PaxDb" id="39947-Q6YZE8"/>
<dbReference type="EnsemblPlants" id="Os08t0531600-01">
    <property type="protein sequence ID" value="Os08t0531600-01"/>
    <property type="gene ID" value="Os08g0531600"/>
</dbReference>
<dbReference type="Gramene" id="Os08t0531600-01">
    <property type="protein sequence ID" value="Os08t0531600-01"/>
    <property type="gene ID" value="Os08g0531600"/>
</dbReference>
<dbReference type="KEGG" id="dosa:Os08g0531600"/>
<dbReference type="eggNOG" id="ENOG502QRGA">
    <property type="taxonomic scope" value="Eukaryota"/>
</dbReference>
<dbReference type="HOGENOM" id="CLU_042475_0_1_1"/>
<dbReference type="InParanoid" id="Q6YZE8"/>
<dbReference type="OMA" id="YTHHQIP"/>
<dbReference type="OrthoDB" id="514967at2759"/>
<dbReference type="PlantReactome" id="R-OSA-9035605">
    <property type="pathway name" value="Regulation of seed size"/>
</dbReference>
<dbReference type="Proteomes" id="UP000000763">
    <property type="component" value="Chromosome 8"/>
</dbReference>
<dbReference type="Proteomes" id="UP000059680">
    <property type="component" value="Chromosome 8"/>
</dbReference>
<dbReference type="GO" id="GO:0005634">
    <property type="term" value="C:nucleus"/>
    <property type="evidence" value="ECO:0007669"/>
    <property type="project" value="UniProtKB-SubCell"/>
</dbReference>
<dbReference type="GO" id="GO:0003677">
    <property type="term" value="F:DNA binding"/>
    <property type="evidence" value="ECO:0007669"/>
    <property type="project" value="UniProtKB-KW"/>
</dbReference>
<dbReference type="GO" id="GO:0008270">
    <property type="term" value="F:zinc ion binding"/>
    <property type="evidence" value="ECO:0007669"/>
    <property type="project" value="UniProtKB-KW"/>
</dbReference>
<dbReference type="FunFam" id="4.10.1100.10:FF:000001">
    <property type="entry name" value="Squamosa promoter-binding-like protein 14"/>
    <property type="match status" value="1"/>
</dbReference>
<dbReference type="Gene3D" id="4.10.1100.10">
    <property type="entry name" value="Transcription factor, SBP-box domain"/>
    <property type="match status" value="1"/>
</dbReference>
<dbReference type="InterPro" id="IPR044817">
    <property type="entry name" value="SBP-like"/>
</dbReference>
<dbReference type="InterPro" id="IPR004333">
    <property type="entry name" value="SBP_dom"/>
</dbReference>
<dbReference type="InterPro" id="IPR036893">
    <property type="entry name" value="SBP_sf"/>
</dbReference>
<dbReference type="PANTHER" id="PTHR31251:SF33">
    <property type="entry name" value="SQUAMOSA PROMOTER-BINDING-LIKE PROTEIN 16"/>
    <property type="match status" value="1"/>
</dbReference>
<dbReference type="PANTHER" id="PTHR31251">
    <property type="entry name" value="SQUAMOSA PROMOTER-BINDING-LIKE PROTEIN 4"/>
    <property type="match status" value="1"/>
</dbReference>
<dbReference type="Pfam" id="PF03110">
    <property type="entry name" value="SBP"/>
    <property type="match status" value="1"/>
</dbReference>
<dbReference type="SUPFAM" id="SSF103612">
    <property type="entry name" value="SBT domain"/>
    <property type="match status" value="1"/>
</dbReference>
<dbReference type="PROSITE" id="PS51141">
    <property type="entry name" value="ZF_SBP"/>
    <property type="match status" value="1"/>
</dbReference>
<feature type="chain" id="PRO_0000308244" description="Squamosa promoter-binding-like protein 16">
    <location>
        <begin position="1"/>
        <end position="455"/>
    </location>
</feature>
<feature type="zinc finger region" description="SBP-type" evidence="3">
    <location>
        <begin position="115"/>
        <end position="192"/>
    </location>
</feature>
<feature type="region of interest" description="Disordered" evidence="4">
    <location>
        <begin position="182"/>
        <end position="204"/>
    </location>
</feature>
<feature type="short sequence motif" description="Bipartite nuclear localization signal" evidence="2">
    <location>
        <begin position="175"/>
        <end position="191"/>
    </location>
</feature>
<feature type="binding site" evidence="3">
    <location>
        <position position="118"/>
    </location>
    <ligand>
        <name>Zn(2+)</name>
        <dbReference type="ChEBI" id="CHEBI:29105"/>
        <label>1</label>
    </ligand>
</feature>
<feature type="binding site" evidence="3">
    <location>
        <position position="123"/>
    </location>
    <ligand>
        <name>Zn(2+)</name>
        <dbReference type="ChEBI" id="CHEBI:29105"/>
        <label>1</label>
    </ligand>
</feature>
<feature type="binding site" evidence="3">
    <location>
        <position position="140"/>
    </location>
    <ligand>
        <name>Zn(2+)</name>
        <dbReference type="ChEBI" id="CHEBI:29105"/>
        <label>1</label>
    </ligand>
</feature>
<feature type="binding site" evidence="3">
    <location>
        <position position="143"/>
    </location>
    <ligand>
        <name>Zn(2+)</name>
        <dbReference type="ChEBI" id="CHEBI:29105"/>
        <label>1</label>
    </ligand>
</feature>
<feature type="binding site" evidence="3">
    <location>
        <position position="159"/>
    </location>
    <ligand>
        <name>Zn(2+)</name>
        <dbReference type="ChEBI" id="CHEBI:29105"/>
        <label>2</label>
    </ligand>
</feature>
<feature type="binding site" evidence="3">
    <location>
        <position position="162"/>
    </location>
    <ligand>
        <name>Zn(2+)</name>
        <dbReference type="ChEBI" id="CHEBI:29105"/>
        <label>2</label>
    </ligand>
</feature>
<feature type="binding site" evidence="3">
    <location>
        <position position="166"/>
    </location>
    <ligand>
        <name>Zn(2+)</name>
        <dbReference type="ChEBI" id="CHEBI:29105"/>
        <label>2</label>
    </ligand>
</feature>
<feature type="binding site" evidence="3">
    <location>
        <position position="178"/>
    </location>
    <ligand>
        <name>Zn(2+)</name>
        <dbReference type="ChEBI" id="CHEBI:29105"/>
        <label>2</label>
    </ligand>
</feature>
<gene>
    <name type="primary">SPL16</name>
    <name type="ordered locus">Os08g0531600</name>
    <name type="ordered locus">LOC_Os08g41940</name>
    <name type="ORF">P0702E04.9</name>
</gene>
<evidence type="ECO:0000250" key="1"/>
<evidence type="ECO:0000255" key="2"/>
<evidence type="ECO:0000255" key="3">
    <source>
        <dbReference type="PROSITE-ProRule" id="PRU00470"/>
    </source>
</evidence>
<evidence type="ECO:0000256" key="4">
    <source>
        <dbReference type="SAM" id="MobiDB-lite"/>
    </source>
</evidence>
<evidence type="ECO:0000269" key="5">
    <source>
    </source>
</evidence>
<evidence type="ECO:0000305" key="6"/>
<evidence type="ECO:0000305" key="7">
    <source>
    </source>
</evidence>
<comment type="function">
    <text evidence="1">Trans-acting factor that binds specifically to the consensus nucleotide sequence 5'-TNCGTACAA-3' (By similarity). May be involved in panicle development.</text>
</comment>
<comment type="subcellular location">
    <subcellularLocation>
        <location evidence="6">Nucleus</location>
    </subcellularLocation>
</comment>
<comment type="tissue specificity">
    <text evidence="5">Expressed in young panicles.</text>
</comment>
<comment type="induction">
    <text evidence="7">Negatively regulated by microRNAs miR156b and miR156h.</text>
</comment>
<comment type="domain">
    <text evidence="1">The SBP-type zinc finger is required for the binding to DNA.</text>
</comment>
<proteinExistence type="evidence at transcript level"/>
<sequence>MEWDLKMPPAASWELADELENSGGGGVPAAVSSSSAAVGGGVNAGGGGRQECSVDLKLGGLGEFGGGGAQPRVAVAGEPAKGKGPAAAATGAAAAASSAPAKRPRGAAAAGQQQCPSCAVDGCKEDLSKCRDYHRRHKVCEAHSKTPLVVVSGREMRFCQQCSRFHLLQEFDEAKRSCRKRLDGHNRRRRKPQPDPMNSASYLASQQGARFSPFATPRPEASWTGMIKTEESPYYTHHQIPLGISSRQQHFVGSTSDGGRRFPFLQEGEISFGTGAGAGGVPMDQAAAAAAASVCQPLLKTVAPPPPPHGGGGSGGGKMFSDGGLTQVLDSDCALSLLSAPANSTAIDVGGGRVVVQPTEHIPMAQPLISGLQFGGGGGSSAWFAARPHHQAATGAAATAVVVSTAGFSCPVVESEQLNTVLSSNDNEMNYNGMFHVGGEGSSDGTSSSLPFSWQ</sequence>
<name>SPL16_ORYSJ</name>